<dbReference type="EMBL" id="CP000673">
    <property type="protein sequence ID" value="EDK33276.1"/>
    <property type="molecule type" value="Genomic_DNA"/>
</dbReference>
<dbReference type="RefSeq" id="WP_012101620.1">
    <property type="nucleotide sequence ID" value="NC_009706.1"/>
</dbReference>
<dbReference type="SMR" id="A5N7J5"/>
<dbReference type="STRING" id="431943.CKL_1234"/>
<dbReference type="KEGG" id="ckl:CKL_1234"/>
<dbReference type="eggNOG" id="COG1438">
    <property type="taxonomic scope" value="Bacteria"/>
</dbReference>
<dbReference type="HOGENOM" id="CLU_097103_3_0_9"/>
<dbReference type="UniPathway" id="UPA00068"/>
<dbReference type="Proteomes" id="UP000002411">
    <property type="component" value="Chromosome"/>
</dbReference>
<dbReference type="GO" id="GO:0005737">
    <property type="term" value="C:cytoplasm"/>
    <property type="evidence" value="ECO:0007669"/>
    <property type="project" value="UniProtKB-SubCell"/>
</dbReference>
<dbReference type="GO" id="GO:0034618">
    <property type="term" value="F:arginine binding"/>
    <property type="evidence" value="ECO:0007669"/>
    <property type="project" value="InterPro"/>
</dbReference>
<dbReference type="GO" id="GO:0003677">
    <property type="term" value="F:DNA binding"/>
    <property type="evidence" value="ECO:0007669"/>
    <property type="project" value="UniProtKB-KW"/>
</dbReference>
<dbReference type="GO" id="GO:0003700">
    <property type="term" value="F:DNA-binding transcription factor activity"/>
    <property type="evidence" value="ECO:0007669"/>
    <property type="project" value="UniProtKB-UniRule"/>
</dbReference>
<dbReference type="GO" id="GO:0006526">
    <property type="term" value="P:L-arginine biosynthetic process"/>
    <property type="evidence" value="ECO:0007669"/>
    <property type="project" value="UniProtKB-UniPathway"/>
</dbReference>
<dbReference type="GO" id="GO:0051259">
    <property type="term" value="P:protein complex oligomerization"/>
    <property type="evidence" value="ECO:0007669"/>
    <property type="project" value="InterPro"/>
</dbReference>
<dbReference type="GO" id="GO:1900079">
    <property type="term" value="P:regulation of arginine biosynthetic process"/>
    <property type="evidence" value="ECO:0007669"/>
    <property type="project" value="UniProtKB-UniRule"/>
</dbReference>
<dbReference type="Gene3D" id="3.30.1360.40">
    <property type="match status" value="1"/>
</dbReference>
<dbReference type="Gene3D" id="1.10.10.10">
    <property type="entry name" value="Winged helix-like DNA-binding domain superfamily/Winged helix DNA-binding domain"/>
    <property type="match status" value="1"/>
</dbReference>
<dbReference type="HAMAP" id="MF_00173">
    <property type="entry name" value="Arg_repressor"/>
    <property type="match status" value="1"/>
</dbReference>
<dbReference type="InterPro" id="IPR001669">
    <property type="entry name" value="Arg_repress"/>
</dbReference>
<dbReference type="InterPro" id="IPR020899">
    <property type="entry name" value="Arg_repress_C"/>
</dbReference>
<dbReference type="InterPro" id="IPR036251">
    <property type="entry name" value="Arg_repress_C_sf"/>
</dbReference>
<dbReference type="InterPro" id="IPR020900">
    <property type="entry name" value="Arg_repress_DNA-bd"/>
</dbReference>
<dbReference type="InterPro" id="IPR036388">
    <property type="entry name" value="WH-like_DNA-bd_sf"/>
</dbReference>
<dbReference type="InterPro" id="IPR036390">
    <property type="entry name" value="WH_DNA-bd_sf"/>
</dbReference>
<dbReference type="NCBIfam" id="TIGR01529">
    <property type="entry name" value="argR_whole"/>
    <property type="match status" value="1"/>
</dbReference>
<dbReference type="NCBIfam" id="NF001680">
    <property type="entry name" value="PRK00441.1"/>
    <property type="match status" value="1"/>
</dbReference>
<dbReference type="PANTHER" id="PTHR34471">
    <property type="entry name" value="ARGININE REPRESSOR"/>
    <property type="match status" value="1"/>
</dbReference>
<dbReference type="PANTHER" id="PTHR34471:SF1">
    <property type="entry name" value="ARGININE REPRESSOR"/>
    <property type="match status" value="1"/>
</dbReference>
<dbReference type="Pfam" id="PF01316">
    <property type="entry name" value="Arg_repressor"/>
    <property type="match status" value="1"/>
</dbReference>
<dbReference type="Pfam" id="PF02863">
    <property type="entry name" value="Arg_repressor_C"/>
    <property type="match status" value="1"/>
</dbReference>
<dbReference type="PRINTS" id="PR01467">
    <property type="entry name" value="ARGREPRESSOR"/>
</dbReference>
<dbReference type="SUPFAM" id="SSF55252">
    <property type="entry name" value="C-terminal domain of arginine repressor"/>
    <property type="match status" value="1"/>
</dbReference>
<dbReference type="SUPFAM" id="SSF46785">
    <property type="entry name" value="Winged helix' DNA-binding domain"/>
    <property type="match status" value="1"/>
</dbReference>
<sequence>MKVTRHAKILEIINSNNIETQEELAEKLKNSGMNVTQATVSRDIKELKLIKVLSDNGRYKYATISRTESFLSNKLVNIFSQTVVSVENIDNFVVIKTISGSASAAAEAIDSLGFIGIAGTIAGDNTIFVMARDREKAHGITQKMKKMISQ</sequence>
<gene>
    <name evidence="1" type="primary">argR</name>
    <name type="ordered locus">CKL_1234</name>
</gene>
<comment type="function">
    <text evidence="1">Regulates arginine biosynthesis genes.</text>
</comment>
<comment type="pathway">
    <text>Amino-acid biosynthesis; L-arginine biosynthesis [regulation].</text>
</comment>
<comment type="subcellular location">
    <subcellularLocation>
        <location evidence="1">Cytoplasm</location>
    </subcellularLocation>
</comment>
<comment type="similarity">
    <text evidence="1">Belongs to the ArgR family.</text>
</comment>
<accession>A5N7J5</accession>
<evidence type="ECO:0000255" key="1">
    <source>
        <dbReference type="HAMAP-Rule" id="MF_00173"/>
    </source>
</evidence>
<keyword id="KW-0028">Amino-acid biosynthesis</keyword>
<keyword id="KW-0055">Arginine biosynthesis</keyword>
<keyword id="KW-0963">Cytoplasm</keyword>
<keyword id="KW-0238">DNA-binding</keyword>
<keyword id="KW-1185">Reference proteome</keyword>
<keyword id="KW-0678">Repressor</keyword>
<keyword id="KW-0804">Transcription</keyword>
<keyword id="KW-0805">Transcription regulation</keyword>
<protein>
    <recommendedName>
        <fullName evidence="1">Arginine repressor</fullName>
    </recommendedName>
</protein>
<organism>
    <name type="scientific">Clostridium kluyveri (strain ATCC 8527 / DSM 555 / NBRC 12016 / NCIMB 10680 / K1)</name>
    <dbReference type="NCBI Taxonomy" id="431943"/>
    <lineage>
        <taxon>Bacteria</taxon>
        <taxon>Bacillati</taxon>
        <taxon>Bacillota</taxon>
        <taxon>Clostridia</taxon>
        <taxon>Eubacteriales</taxon>
        <taxon>Clostridiaceae</taxon>
        <taxon>Clostridium</taxon>
    </lineage>
</organism>
<name>ARGR_CLOK5</name>
<reference key="1">
    <citation type="journal article" date="2008" name="Proc. Natl. Acad. Sci. U.S.A.">
        <title>The genome of Clostridium kluyveri, a strict anaerobe with unique metabolic features.</title>
        <authorList>
            <person name="Seedorf H."/>
            <person name="Fricke W.F."/>
            <person name="Veith B."/>
            <person name="Brueggemann H."/>
            <person name="Liesegang H."/>
            <person name="Strittmatter A."/>
            <person name="Miethke M."/>
            <person name="Buckel W."/>
            <person name="Hinderberger J."/>
            <person name="Li F."/>
            <person name="Hagemeier C."/>
            <person name="Thauer R.K."/>
            <person name="Gottschalk G."/>
        </authorList>
    </citation>
    <scope>NUCLEOTIDE SEQUENCE [LARGE SCALE GENOMIC DNA]</scope>
    <source>
        <strain>ATCC 8527 / DSM 555 / NBRC 12016 / NCIMB 10680 / K1</strain>
    </source>
</reference>
<proteinExistence type="inferred from homology"/>
<feature type="chain" id="PRO_1000077123" description="Arginine repressor">
    <location>
        <begin position="1"/>
        <end position="150"/>
    </location>
</feature>